<comment type="function">
    <text evidence="1">Catalyzes the reversible isomerization of glucose-6-phosphate to fructose-6-phosphate.</text>
</comment>
<comment type="catalytic activity">
    <reaction evidence="1">
        <text>alpha-D-glucose 6-phosphate = beta-D-fructose 6-phosphate</text>
        <dbReference type="Rhea" id="RHEA:11816"/>
        <dbReference type="ChEBI" id="CHEBI:57634"/>
        <dbReference type="ChEBI" id="CHEBI:58225"/>
        <dbReference type="EC" id="5.3.1.9"/>
    </reaction>
</comment>
<comment type="pathway">
    <text evidence="1">Carbohydrate biosynthesis; gluconeogenesis.</text>
</comment>
<comment type="pathway">
    <text evidence="1">Carbohydrate degradation; glycolysis; D-glyceraldehyde 3-phosphate and glycerone phosphate from D-glucose: step 2/4.</text>
</comment>
<comment type="subcellular location">
    <subcellularLocation>
        <location evidence="1">Cytoplasm</location>
    </subcellularLocation>
</comment>
<comment type="similarity">
    <text evidence="1">Belongs to the GPI family.</text>
</comment>
<gene>
    <name evidence="1" type="primary">pgi</name>
    <name type="ordered locus">CBU_0848</name>
</gene>
<organism>
    <name type="scientific">Coxiella burnetii (strain RSA 493 / Nine Mile phase I)</name>
    <dbReference type="NCBI Taxonomy" id="227377"/>
    <lineage>
        <taxon>Bacteria</taxon>
        <taxon>Pseudomonadati</taxon>
        <taxon>Pseudomonadota</taxon>
        <taxon>Gammaproteobacteria</taxon>
        <taxon>Legionellales</taxon>
        <taxon>Coxiellaceae</taxon>
        <taxon>Coxiella</taxon>
    </lineage>
</organism>
<protein>
    <recommendedName>
        <fullName evidence="1">Glucose-6-phosphate isomerase</fullName>
        <shortName evidence="1">GPI</shortName>
        <ecNumber evidence="1">5.3.1.9</ecNumber>
    </recommendedName>
    <alternativeName>
        <fullName evidence="1">Phosphoglucose isomerase</fullName>
        <shortName evidence="1">PGI</shortName>
    </alternativeName>
    <alternativeName>
        <fullName evidence="1">Phosphohexose isomerase</fullName>
        <shortName evidence="1">PHI</shortName>
    </alternativeName>
</protein>
<name>G6PI_COXBU</name>
<proteinExistence type="inferred from homology"/>
<dbReference type="EC" id="5.3.1.9" evidence="1"/>
<dbReference type="EMBL" id="AE016828">
    <property type="protein sequence ID" value="AAO90382.1"/>
    <property type="molecule type" value="Genomic_DNA"/>
</dbReference>
<dbReference type="RefSeq" id="NP_819868.1">
    <property type="nucleotide sequence ID" value="NC_002971.4"/>
</dbReference>
<dbReference type="RefSeq" id="WP_010957846.1">
    <property type="nucleotide sequence ID" value="NC_002971.4"/>
</dbReference>
<dbReference type="SMR" id="Q83D91"/>
<dbReference type="STRING" id="227377.CBU_0848"/>
<dbReference type="EnsemblBacteria" id="AAO90382">
    <property type="protein sequence ID" value="AAO90382"/>
    <property type="gene ID" value="CBU_0848"/>
</dbReference>
<dbReference type="GeneID" id="1208741"/>
<dbReference type="KEGG" id="cbu:CBU_0848"/>
<dbReference type="PATRIC" id="fig|227377.7.peg.833"/>
<dbReference type="eggNOG" id="COG0166">
    <property type="taxonomic scope" value="Bacteria"/>
</dbReference>
<dbReference type="HOGENOM" id="CLU_017947_3_1_6"/>
<dbReference type="OrthoDB" id="140919at2"/>
<dbReference type="UniPathway" id="UPA00109">
    <property type="reaction ID" value="UER00181"/>
</dbReference>
<dbReference type="UniPathway" id="UPA00138"/>
<dbReference type="Proteomes" id="UP000002671">
    <property type="component" value="Chromosome"/>
</dbReference>
<dbReference type="GO" id="GO:0005829">
    <property type="term" value="C:cytosol"/>
    <property type="evidence" value="ECO:0000318"/>
    <property type="project" value="GO_Central"/>
</dbReference>
<dbReference type="GO" id="GO:0097367">
    <property type="term" value="F:carbohydrate derivative binding"/>
    <property type="evidence" value="ECO:0007669"/>
    <property type="project" value="InterPro"/>
</dbReference>
<dbReference type="GO" id="GO:0004347">
    <property type="term" value="F:glucose-6-phosphate isomerase activity"/>
    <property type="evidence" value="ECO:0000318"/>
    <property type="project" value="GO_Central"/>
</dbReference>
<dbReference type="GO" id="GO:0048029">
    <property type="term" value="F:monosaccharide binding"/>
    <property type="evidence" value="ECO:0000318"/>
    <property type="project" value="GO_Central"/>
</dbReference>
<dbReference type="GO" id="GO:0006094">
    <property type="term" value="P:gluconeogenesis"/>
    <property type="evidence" value="ECO:0000318"/>
    <property type="project" value="GO_Central"/>
</dbReference>
<dbReference type="GO" id="GO:0051156">
    <property type="term" value="P:glucose 6-phosphate metabolic process"/>
    <property type="evidence" value="ECO:0000318"/>
    <property type="project" value="GO_Central"/>
</dbReference>
<dbReference type="GO" id="GO:0006096">
    <property type="term" value="P:glycolytic process"/>
    <property type="evidence" value="ECO:0000318"/>
    <property type="project" value="GO_Central"/>
</dbReference>
<dbReference type="CDD" id="cd05015">
    <property type="entry name" value="SIS_PGI_1"/>
    <property type="match status" value="1"/>
</dbReference>
<dbReference type="CDD" id="cd05016">
    <property type="entry name" value="SIS_PGI_2"/>
    <property type="match status" value="1"/>
</dbReference>
<dbReference type="Gene3D" id="1.10.1390.10">
    <property type="match status" value="1"/>
</dbReference>
<dbReference type="Gene3D" id="3.40.50.10490">
    <property type="entry name" value="Glucose-6-phosphate isomerase like protein, domain 1"/>
    <property type="match status" value="2"/>
</dbReference>
<dbReference type="HAMAP" id="MF_00473">
    <property type="entry name" value="G6P_isomerase"/>
    <property type="match status" value="1"/>
</dbReference>
<dbReference type="InterPro" id="IPR001672">
    <property type="entry name" value="G6P_Isomerase"/>
</dbReference>
<dbReference type="InterPro" id="IPR023096">
    <property type="entry name" value="G6P_Isomerase_C"/>
</dbReference>
<dbReference type="InterPro" id="IPR018189">
    <property type="entry name" value="Phosphoglucose_isomerase_CS"/>
</dbReference>
<dbReference type="InterPro" id="IPR046348">
    <property type="entry name" value="SIS_dom_sf"/>
</dbReference>
<dbReference type="InterPro" id="IPR035476">
    <property type="entry name" value="SIS_PGI_1"/>
</dbReference>
<dbReference type="InterPro" id="IPR035482">
    <property type="entry name" value="SIS_PGI_2"/>
</dbReference>
<dbReference type="NCBIfam" id="NF001211">
    <property type="entry name" value="PRK00179.1"/>
    <property type="match status" value="1"/>
</dbReference>
<dbReference type="PANTHER" id="PTHR11469">
    <property type="entry name" value="GLUCOSE-6-PHOSPHATE ISOMERASE"/>
    <property type="match status" value="1"/>
</dbReference>
<dbReference type="PANTHER" id="PTHR11469:SF1">
    <property type="entry name" value="GLUCOSE-6-PHOSPHATE ISOMERASE"/>
    <property type="match status" value="1"/>
</dbReference>
<dbReference type="Pfam" id="PF00342">
    <property type="entry name" value="PGI"/>
    <property type="match status" value="1"/>
</dbReference>
<dbReference type="PRINTS" id="PR00662">
    <property type="entry name" value="G6PISOMERASE"/>
</dbReference>
<dbReference type="SUPFAM" id="SSF53697">
    <property type="entry name" value="SIS domain"/>
    <property type="match status" value="1"/>
</dbReference>
<dbReference type="PROSITE" id="PS00174">
    <property type="entry name" value="P_GLUCOSE_ISOMERASE_2"/>
    <property type="match status" value="1"/>
</dbReference>
<dbReference type="PROSITE" id="PS51463">
    <property type="entry name" value="P_GLUCOSE_ISOMERASE_3"/>
    <property type="match status" value="1"/>
</dbReference>
<keyword id="KW-0963">Cytoplasm</keyword>
<keyword id="KW-0312">Gluconeogenesis</keyword>
<keyword id="KW-0324">Glycolysis</keyword>
<keyword id="KW-0413">Isomerase</keyword>
<keyword id="KW-1185">Reference proteome</keyword>
<sequence>MSLVESPPWQALKSKYQELSSLHMRDFFAQDKKRGTRLSLEAAGLYFDYSKNRVDEKTIDLLCESANACNLPLRIEQLFSGKLTNESGEMVGFHTALRQVNNFSFKTNNNAIQEIHASWEKIKKLSIRIREGDYKGFTNKSITDIVNIGIGGSSLGPQMAYNALKPYVKAPLRCHFISNLDDTDFYETVRTLNPETTLFIITSKTFTTKETLENARRATEWLMQAAKKENLIQTHFMAVTAAPEKAHEFGIQKDNIFMLWPWVGGRFSVWSAAGLSLAIAIGWEEFFEFLRGAHAMDTHFRQAEFNKNMPILLALLSIWYINFFHAKTQAIIPYSQRLVYLPDYLTQLHMESLGKSVQLDGSAVHWQTGAVVWGDLGTNSQHSFHQLFLQGTMVIPVDFIAVLKNSRESHWQLPLIANCLGQSQTLMEGYDKEGVMRDLINQGIEHEKAEKLATYRLIRGNNPSNTIILEELNPYSLGSLLALYEHKVYVQSVIWNINPFDQWGVERGKHLAKDILQALQAETDQSSFDSSTERLINYVLKIKGNRP</sequence>
<feature type="chain" id="PRO_0000180635" description="Glucose-6-phosphate isomerase">
    <location>
        <begin position="1"/>
        <end position="547"/>
    </location>
</feature>
<feature type="active site" description="Proton donor" evidence="1">
    <location>
        <position position="351"/>
    </location>
</feature>
<feature type="active site" evidence="1">
    <location>
        <position position="382"/>
    </location>
</feature>
<feature type="active site" evidence="1">
    <location>
        <position position="509"/>
    </location>
</feature>
<evidence type="ECO:0000255" key="1">
    <source>
        <dbReference type="HAMAP-Rule" id="MF_00473"/>
    </source>
</evidence>
<accession>Q83D91</accession>
<reference key="1">
    <citation type="journal article" date="2003" name="Proc. Natl. Acad. Sci. U.S.A.">
        <title>Complete genome sequence of the Q-fever pathogen, Coxiella burnetii.</title>
        <authorList>
            <person name="Seshadri R."/>
            <person name="Paulsen I.T."/>
            <person name="Eisen J.A."/>
            <person name="Read T.D."/>
            <person name="Nelson K.E."/>
            <person name="Nelson W.C."/>
            <person name="Ward N.L."/>
            <person name="Tettelin H."/>
            <person name="Davidsen T.M."/>
            <person name="Beanan M.J."/>
            <person name="DeBoy R.T."/>
            <person name="Daugherty S.C."/>
            <person name="Brinkac L.M."/>
            <person name="Madupu R."/>
            <person name="Dodson R.J."/>
            <person name="Khouri H.M."/>
            <person name="Lee K.H."/>
            <person name="Carty H.A."/>
            <person name="Scanlan D."/>
            <person name="Heinzen R.A."/>
            <person name="Thompson H.A."/>
            <person name="Samuel J.E."/>
            <person name="Fraser C.M."/>
            <person name="Heidelberg J.F."/>
        </authorList>
    </citation>
    <scope>NUCLEOTIDE SEQUENCE [LARGE SCALE GENOMIC DNA]</scope>
    <source>
        <strain>RSA 493 / Nine Mile phase I</strain>
    </source>
</reference>